<organism>
    <name type="scientific">Burkholderia orbicola (strain MC0-3)</name>
    <dbReference type="NCBI Taxonomy" id="406425"/>
    <lineage>
        <taxon>Bacteria</taxon>
        <taxon>Pseudomonadati</taxon>
        <taxon>Pseudomonadota</taxon>
        <taxon>Betaproteobacteria</taxon>
        <taxon>Burkholderiales</taxon>
        <taxon>Burkholderiaceae</taxon>
        <taxon>Burkholderia</taxon>
        <taxon>Burkholderia cepacia complex</taxon>
        <taxon>Burkholderia orbicola</taxon>
    </lineage>
</organism>
<evidence type="ECO:0000255" key="1">
    <source>
        <dbReference type="HAMAP-Rule" id="MF_01595"/>
    </source>
</evidence>
<comment type="function">
    <text evidence="1">Involved in mRNA degradation. Catalyzes the phosphorolysis of single-stranded polyribonucleotides processively in the 3'- to 5'-direction.</text>
</comment>
<comment type="catalytic activity">
    <reaction evidence="1">
        <text>RNA(n+1) + phosphate = RNA(n) + a ribonucleoside 5'-diphosphate</text>
        <dbReference type="Rhea" id="RHEA:22096"/>
        <dbReference type="Rhea" id="RHEA-COMP:14527"/>
        <dbReference type="Rhea" id="RHEA-COMP:17342"/>
        <dbReference type="ChEBI" id="CHEBI:43474"/>
        <dbReference type="ChEBI" id="CHEBI:57930"/>
        <dbReference type="ChEBI" id="CHEBI:140395"/>
        <dbReference type="EC" id="2.7.7.8"/>
    </reaction>
</comment>
<comment type="cofactor">
    <cofactor evidence="1">
        <name>Mg(2+)</name>
        <dbReference type="ChEBI" id="CHEBI:18420"/>
    </cofactor>
</comment>
<comment type="subcellular location">
    <subcellularLocation>
        <location evidence="1">Cytoplasm</location>
    </subcellularLocation>
</comment>
<comment type="similarity">
    <text evidence="1">Belongs to the polyribonucleotide nucleotidyltransferase family.</text>
</comment>
<dbReference type="EC" id="2.7.7.8" evidence="1"/>
<dbReference type="EMBL" id="CP000958">
    <property type="protein sequence ID" value="ACA91438.1"/>
    <property type="molecule type" value="Genomic_DNA"/>
</dbReference>
<dbReference type="RefSeq" id="WP_012328908.1">
    <property type="nucleotide sequence ID" value="NC_010508.1"/>
</dbReference>
<dbReference type="SMR" id="B1JVP5"/>
<dbReference type="GeneID" id="83049066"/>
<dbReference type="KEGG" id="bcm:Bcenmc03_2277"/>
<dbReference type="HOGENOM" id="CLU_004217_2_2_4"/>
<dbReference type="Proteomes" id="UP000002169">
    <property type="component" value="Chromosome 1"/>
</dbReference>
<dbReference type="GO" id="GO:0005829">
    <property type="term" value="C:cytosol"/>
    <property type="evidence" value="ECO:0007669"/>
    <property type="project" value="TreeGrafter"/>
</dbReference>
<dbReference type="GO" id="GO:0000175">
    <property type="term" value="F:3'-5'-RNA exonuclease activity"/>
    <property type="evidence" value="ECO:0007669"/>
    <property type="project" value="TreeGrafter"/>
</dbReference>
<dbReference type="GO" id="GO:0000287">
    <property type="term" value="F:magnesium ion binding"/>
    <property type="evidence" value="ECO:0007669"/>
    <property type="project" value="UniProtKB-UniRule"/>
</dbReference>
<dbReference type="GO" id="GO:0004654">
    <property type="term" value="F:polyribonucleotide nucleotidyltransferase activity"/>
    <property type="evidence" value="ECO:0007669"/>
    <property type="project" value="UniProtKB-UniRule"/>
</dbReference>
<dbReference type="GO" id="GO:0003723">
    <property type="term" value="F:RNA binding"/>
    <property type="evidence" value="ECO:0007669"/>
    <property type="project" value="UniProtKB-UniRule"/>
</dbReference>
<dbReference type="GO" id="GO:0006402">
    <property type="term" value="P:mRNA catabolic process"/>
    <property type="evidence" value="ECO:0007669"/>
    <property type="project" value="UniProtKB-UniRule"/>
</dbReference>
<dbReference type="GO" id="GO:0006396">
    <property type="term" value="P:RNA processing"/>
    <property type="evidence" value="ECO:0007669"/>
    <property type="project" value="InterPro"/>
</dbReference>
<dbReference type="CDD" id="cd02393">
    <property type="entry name" value="KH-I_PNPase"/>
    <property type="match status" value="1"/>
</dbReference>
<dbReference type="CDD" id="cd11363">
    <property type="entry name" value="RNase_PH_PNPase_1"/>
    <property type="match status" value="1"/>
</dbReference>
<dbReference type="CDD" id="cd11364">
    <property type="entry name" value="RNase_PH_PNPase_2"/>
    <property type="match status" value="1"/>
</dbReference>
<dbReference type="CDD" id="cd04472">
    <property type="entry name" value="S1_PNPase"/>
    <property type="match status" value="1"/>
</dbReference>
<dbReference type="FunFam" id="3.30.1370.10:FF:000001">
    <property type="entry name" value="Polyribonucleotide nucleotidyltransferase"/>
    <property type="match status" value="1"/>
</dbReference>
<dbReference type="FunFam" id="3.30.230.70:FF:000001">
    <property type="entry name" value="Polyribonucleotide nucleotidyltransferase"/>
    <property type="match status" value="1"/>
</dbReference>
<dbReference type="FunFam" id="3.30.230.70:FF:000002">
    <property type="entry name" value="Polyribonucleotide nucleotidyltransferase"/>
    <property type="match status" value="1"/>
</dbReference>
<dbReference type="FunFam" id="2.40.50.140:FF:000189">
    <property type="entry name" value="Polyribonucleotide nucleotidyltransferase, putative"/>
    <property type="match status" value="1"/>
</dbReference>
<dbReference type="Gene3D" id="3.30.230.70">
    <property type="entry name" value="GHMP Kinase, N-terminal domain"/>
    <property type="match status" value="2"/>
</dbReference>
<dbReference type="Gene3D" id="3.30.1370.10">
    <property type="entry name" value="K Homology domain, type 1"/>
    <property type="match status" value="1"/>
</dbReference>
<dbReference type="Gene3D" id="2.40.50.140">
    <property type="entry name" value="Nucleic acid-binding proteins"/>
    <property type="match status" value="1"/>
</dbReference>
<dbReference type="HAMAP" id="MF_01595">
    <property type="entry name" value="PNPase"/>
    <property type="match status" value="1"/>
</dbReference>
<dbReference type="InterPro" id="IPR001247">
    <property type="entry name" value="ExoRNase_PH_dom1"/>
</dbReference>
<dbReference type="InterPro" id="IPR015847">
    <property type="entry name" value="ExoRNase_PH_dom2"/>
</dbReference>
<dbReference type="InterPro" id="IPR036345">
    <property type="entry name" value="ExoRNase_PH_dom2_sf"/>
</dbReference>
<dbReference type="InterPro" id="IPR004087">
    <property type="entry name" value="KH_dom"/>
</dbReference>
<dbReference type="InterPro" id="IPR004088">
    <property type="entry name" value="KH_dom_type_1"/>
</dbReference>
<dbReference type="InterPro" id="IPR036612">
    <property type="entry name" value="KH_dom_type_1_sf"/>
</dbReference>
<dbReference type="InterPro" id="IPR012340">
    <property type="entry name" value="NA-bd_OB-fold"/>
</dbReference>
<dbReference type="InterPro" id="IPR012162">
    <property type="entry name" value="PNPase"/>
</dbReference>
<dbReference type="InterPro" id="IPR027408">
    <property type="entry name" value="PNPase/RNase_PH_dom_sf"/>
</dbReference>
<dbReference type="InterPro" id="IPR015848">
    <property type="entry name" value="PNPase_PH_RNA-bd_bac/org-type"/>
</dbReference>
<dbReference type="InterPro" id="IPR020568">
    <property type="entry name" value="Ribosomal_Su5_D2-typ_SF"/>
</dbReference>
<dbReference type="InterPro" id="IPR003029">
    <property type="entry name" value="S1_domain"/>
</dbReference>
<dbReference type="NCBIfam" id="TIGR03591">
    <property type="entry name" value="polynuc_phos"/>
    <property type="match status" value="1"/>
</dbReference>
<dbReference type="NCBIfam" id="NF008805">
    <property type="entry name" value="PRK11824.1"/>
    <property type="match status" value="1"/>
</dbReference>
<dbReference type="PANTHER" id="PTHR11252">
    <property type="entry name" value="POLYRIBONUCLEOTIDE NUCLEOTIDYLTRANSFERASE"/>
    <property type="match status" value="1"/>
</dbReference>
<dbReference type="PANTHER" id="PTHR11252:SF0">
    <property type="entry name" value="POLYRIBONUCLEOTIDE NUCLEOTIDYLTRANSFERASE 1, MITOCHONDRIAL"/>
    <property type="match status" value="1"/>
</dbReference>
<dbReference type="Pfam" id="PF00013">
    <property type="entry name" value="KH_1"/>
    <property type="match status" value="1"/>
</dbReference>
<dbReference type="Pfam" id="PF03726">
    <property type="entry name" value="PNPase"/>
    <property type="match status" value="1"/>
</dbReference>
<dbReference type="Pfam" id="PF01138">
    <property type="entry name" value="RNase_PH"/>
    <property type="match status" value="2"/>
</dbReference>
<dbReference type="Pfam" id="PF03725">
    <property type="entry name" value="RNase_PH_C"/>
    <property type="match status" value="2"/>
</dbReference>
<dbReference type="Pfam" id="PF00575">
    <property type="entry name" value="S1"/>
    <property type="match status" value="1"/>
</dbReference>
<dbReference type="PIRSF" id="PIRSF005499">
    <property type="entry name" value="PNPase"/>
    <property type="match status" value="1"/>
</dbReference>
<dbReference type="SMART" id="SM00322">
    <property type="entry name" value="KH"/>
    <property type="match status" value="1"/>
</dbReference>
<dbReference type="SMART" id="SM00316">
    <property type="entry name" value="S1"/>
    <property type="match status" value="1"/>
</dbReference>
<dbReference type="SUPFAM" id="SSF54791">
    <property type="entry name" value="Eukaryotic type KH-domain (KH-domain type I)"/>
    <property type="match status" value="1"/>
</dbReference>
<dbReference type="SUPFAM" id="SSF50249">
    <property type="entry name" value="Nucleic acid-binding proteins"/>
    <property type="match status" value="1"/>
</dbReference>
<dbReference type="SUPFAM" id="SSF55666">
    <property type="entry name" value="Ribonuclease PH domain 2-like"/>
    <property type="match status" value="2"/>
</dbReference>
<dbReference type="SUPFAM" id="SSF54211">
    <property type="entry name" value="Ribosomal protein S5 domain 2-like"/>
    <property type="match status" value="2"/>
</dbReference>
<dbReference type="PROSITE" id="PS50084">
    <property type="entry name" value="KH_TYPE_1"/>
    <property type="match status" value="1"/>
</dbReference>
<dbReference type="PROSITE" id="PS50126">
    <property type="entry name" value="S1"/>
    <property type="match status" value="1"/>
</dbReference>
<protein>
    <recommendedName>
        <fullName evidence="1">Polyribonucleotide nucleotidyltransferase</fullName>
        <ecNumber evidence="1">2.7.7.8</ecNumber>
    </recommendedName>
    <alternativeName>
        <fullName evidence="1">Polynucleotide phosphorylase</fullName>
        <shortName evidence="1">PNPase</shortName>
    </alternativeName>
</protein>
<keyword id="KW-0963">Cytoplasm</keyword>
<keyword id="KW-0460">Magnesium</keyword>
<keyword id="KW-0479">Metal-binding</keyword>
<keyword id="KW-0548">Nucleotidyltransferase</keyword>
<keyword id="KW-0694">RNA-binding</keyword>
<keyword id="KW-0808">Transferase</keyword>
<gene>
    <name evidence="1" type="primary">pnp</name>
    <name type="ordered locus">Bcenmc03_2277</name>
</gene>
<name>PNP_BURO0</name>
<sequence>MSMFNKVVKEFQWGQHKVRLETGEVARQASGAVIVDVEDTVVLATVVGAKSAKPGQDFFPLTVDYLEKTYSAGKIPGGFFRREGRPSEHETLTSRLIDRPLRPLFPEGFYNEVQVVIHVLSVNPEIPADIPALIGASAALAVSGLPFNGPVGAARVAYIDNAYVLNPTRDQLKASSLDLVVAGTERAVLMVESEADQLSEEVMLGAVVFGHEQMQIAIDAIHELVRDGGKPEWDWQPAAKNEALIARVTELAQNDLLAAYQLRDKQARSAKLKEVYAATSAKLEEDALAAGTVAADKATVGNVLFDIEAKIVRSQILNGEPRIDGRDTRTVRPIEIRTGVLPRTHGSALFTRGETQALVVATLGTKGDEQIIDALEGEYRERFMLHYNMPPFATGETGRVGSPKRREIGHGRLAKRALVKCLPSADEFGYSIRVVSEITESNGSSSMASVCGGCLALMDAGVPMKAHVAGIAMGLILEGNKFAVLTDILGDEDHLGDMDFKVAGTEQGVTALQMDIKIQGITKEIMQVALAQAKEGRLHILGKMTSAVSGANTQLSEFAPRMITVKINPEKIRDVIGKGGSVIRALTEETGTTIDISDDGVVTIASTSSEGMAEAKKRIEQITAEIEVGQVYEGTVLKLLDFGAIVNLLPGKDGLLHISEIVNERVKDINDYLKEGQQVKVKVIQTDEKGRVRLSAKALLNEAAAAAQSDTPPQQ</sequence>
<accession>B1JVP5</accession>
<feature type="chain" id="PRO_1000147895" description="Polyribonucleotide nucleotidyltransferase">
    <location>
        <begin position="1"/>
        <end position="715"/>
    </location>
</feature>
<feature type="domain" description="KH" evidence="1">
    <location>
        <begin position="560"/>
        <end position="619"/>
    </location>
</feature>
<feature type="domain" description="S1 motif" evidence="1">
    <location>
        <begin position="629"/>
        <end position="697"/>
    </location>
</feature>
<feature type="binding site" evidence="1">
    <location>
        <position position="493"/>
    </location>
    <ligand>
        <name>Mg(2+)</name>
        <dbReference type="ChEBI" id="CHEBI:18420"/>
    </ligand>
</feature>
<feature type="binding site" evidence="1">
    <location>
        <position position="499"/>
    </location>
    <ligand>
        <name>Mg(2+)</name>
        <dbReference type="ChEBI" id="CHEBI:18420"/>
    </ligand>
</feature>
<proteinExistence type="inferred from homology"/>
<reference key="1">
    <citation type="submission" date="2008-02" db="EMBL/GenBank/DDBJ databases">
        <title>Complete sequence of chromosome 1 of Burkholderia cenocepacia MC0-3.</title>
        <authorList>
            <person name="Copeland A."/>
            <person name="Lucas S."/>
            <person name="Lapidus A."/>
            <person name="Barry K."/>
            <person name="Bruce D."/>
            <person name="Goodwin L."/>
            <person name="Glavina del Rio T."/>
            <person name="Dalin E."/>
            <person name="Tice H."/>
            <person name="Pitluck S."/>
            <person name="Chain P."/>
            <person name="Malfatti S."/>
            <person name="Shin M."/>
            <person name="Vergez L."/>
            <person name="Schmutz J."/>
            <person name="Larimer F."/>
            <person name="Land M."/>
            <person name="Hauser L."/>
            <person name="Kyrpides N."/>
            <person name="Mikhailova N."/>
            <person name="Tiedje J."/>
            <person name="Richardson P."/>
        </authorList>
    </citation>
    <scope>NUCLEOTIDE SEQUENCE [LARGE SCALE GENOMIC DNA]</scope>
    <source>
        <strain>MC0-3</strain>
    </source>
</reference>